<organism>
    <name type="scientific">Bacillus subtilis (strain 168)</name>
    <dbReference type="NCBI Taxonomy" id="224308"/>
    <lineage>
        <taxon>Bacteria</taxon>
        <taxon>Bacillati</taxon>
        <taxon>Bacillota</taxon>
        <taxon>Bacilli</taxon>
        <taxon>Bacillales</taxon>
        <taxon>Bacillaceae</taxon>
        <taxon>Bacillus</taxon>
    </lineage>
</organism>
<keyword id="KW-1003">Cell membrane</keyword>
<keyword id="KW-0472">Membrane</keyword>
<keyword id="KW-1185">Reference proteome</keyword>
<keyword id="KW-0812">Transmembrane</keyword>
<keyword id="KW-1133">Transmembrane helix</keyword>
<keyword id="KW-0813">Transport</keyword>
<protein>
    <recommendedName>
        <fullName>Protein LplC</fullName>
    </recommendedName>
</protein>
<feature type="chain" id="PRO_0000060067" description="Protein LplC">
    <location>
        <begin position="1"/>
        <end position="295"/>
    </location>
</feature>
<feature type="transmembrane region" description="Helical" evidence="1">
    <location>
        <begin position="21"/>
        <end position="41"/>
    </location>
</feature>
<feature type="transmembrane region" description="Helical" evidence="1">
    <location>
        <begin position="81"/>
        <end position="101"/>
    </location>
</feature>
<feature type="transmembrane region" description="Helical" evidence="1">
    <location>
        <begin position="116"/>
        <end position="136"/>
    </location>
</feature>
<feature type="transmembrane region" description="Helical" evidence="1">
    <location>
        <begin position="142"/>
        <end position="162"/>
    </location>
</feature>
<feature type="transmembrane region" description="Helical" evidence="1">
    <location>
        <begin position="199"/>
        <end position="219"/>
    </location>
</feature>
<feature type="transmembrane region" description="Helical" evidence="1">
    <location>
        <begin position="260"/>
        <end position="280"/>
    </location>
</feature>
<feature type="domain" description="ABC transmembrane type-1" evidence="1">
    <location>
        <begin position="79"/>
        <end position="280"/>
    </location>
</feature>
<proteinExistence type="inferred from homology"/>
<evidence type="ECO:0000255" key="1">
    <source>
        <dbReference type="PROSITE-ProRule" id="PRU00441"/>
    </source>
</evidence>
<evidence type="ECO:0000305" key="2"/>
<dbReference type="EMBL" id="L19164">
    <property type="protein sequence ID" value="AAA22576.1"/>
    <property type="molecule type" value="Genomic_DNA"/>
</dbReference>
<dbReference type="EMBL" id="AL009126">
    <property type="protein sequence ID" value="CAB12531.1"/>
    <property type="molecule type" value="Genomic_DNA"/>
</dbReference>
<dbReference type="PIR" id="B69653">
    <property type="entry name" value="B69653"/>
</dbReference>
<dbReference type="RefSeq" id="NP_388593.1">
    <property type="nucleotide sequence ID" value="NC_000964.3"/>
</dbReference>
<dbReference type="RefSeq" id="WP_003242715.1">
    <property type="nucleotide sequence ID" value="NZ_OZ025638.1"/>
</dbReference>
<dbReference type="SMR" id="P39129"/>
<dbReference type="FunCoup" id="P39129">
    <property type="interactions" value="185"/>
</dbReference>
<dbReference type="STRING" id="224308.BSU07120"/>
<dbReference type="PaxDb" id="224308-BSU07120"/>
<dbReference type="EnsemblBacteria" id="CAB12531">
    <property type="protein sequence ID" value="CAB12531"/>
    <property type="gene ID" value="BSU_07120"/>
</dbReference>
<dbReference type="GeneID" id="938767"/>
<dbReference type="KEGG" id="bsu:BSU07120"/>
<dbReference type="PATRIC" id="fig|224308.179.peg.772"/>
<dbReference type="eggNOG" id="COG0395">
    <property type="taxonomic scope" value="Bacteria"/>
</dbReference>
<dbReference type="InParanoid" id="P39129"/>
<dbReference type="OrthoDB" id="9810086at2"/>
<dbReference type="PhylomeDB" id="P39129"/>
<dbReference type="Proteomes" id="UP000001570">
    <property type="component" value="Chromosome"/>
</dbReference>
<dbReference type="GO" id="GO:0005886">
    <property type="term" value="C:plasma membrane"/>
    <property type="evidence" value="ECO:0007669"/>
    <property type="project" value="UniProtKB-SubCell"/>
</dbReference>
<dbReference type="GO" id="GO:0055085">
    <property type="term" value="P:transmembrane transport"/>
    <property type="evidence" value="ECO:0007669"/>
    <property type="project" value="InterPro"/>
</dbReference>
<dbReference type="CDD" id="cd06261">
    <property type="entry name" value="TM_PBP2"/>
    <property type="match status" value="1"/>
</dbReference>
<dbReference type="Gene3D" id="1.10.3720.10">
    <property type="entry name" value="MetI-like"/>
    <property type="match status" value="1"/>
</dbReference>
<dbReference type="InterPro" id="IPR000515">
    <property type="entry name" value="MetI-like"/>
</dbReference>
<dbReference type="InterPro" id="IPR035906">
    <property type="entry name" value="MetI-like_sf"/>
</dbReference>
<dbReference type="PANTHER" id="PTHR43744">
    <property type="entry name" value="ABC TRANSPORTER PERMEASE PROTEIN MG189-RELATED-RELATED"/>
    <property type="match status" value="1"/>
</dbReference>
<dbReference type="PANTHER" id="PTHR43744:SF9">
    <property type="entry name" value="POLYGALACTURONAN_RHAMNOGALACTURONAN TRANSPORT SYSTEM PERMEASE PROTEIN YTCP"/>
    <property type="match status" value="1"/>
</dbReference>
<dbReference type="Pfam" id="PF00528">
    <property type="entry name" value="BPD_transp_1"/>
    <property type="match status" value="1"/>
</dbReference>
<dbReference type="SUPFAM" id="SSF161098">
    <property type="entry name" value="MetI-like"/>
    <property type="match status" value="1"/>
</dbReference>
<dbReference type="PROSITE" id="PS50928">
    <property type="entry name" value="ABC_TM1"/>
    <property type="match status" value="1"/>
</dbReference>
<reference key="1">
    <citation type="submission" date="1994-01" db="EMBL/GenBank/DDBJ databases">
        <title>The complete lpl cluster of Bacillus subtilis.</title>
        <authorList>
            <person name="Gomez A."/>
            <person name="Ramon D."/>
            <person name="Sanz P."/>
        </authorList>
    </citation>
    <scope>NUCLEOTIDE SEQUENCE [GENOMIC DNA]</scope>
    <source>
        <strain>168 / Marburg / ATCC 6051 / DSM 10 / JCM 1465 / NBRC 13719 / NCIMB 3610 / NRRL NRS-744 / VKM B-501</strain>
    </source>
</reference>
<reference key="2">
    <citation type="journal article" date="1997" name="Nature">
        <title>The complete genome sequence of the Gram-positive bacterium Bacillus subtilis.</title>
        <authorList>
            <person name="Kunst F."/>
            <person name="Ogasawara N."/>
            <person name="Moszer I."/>
            <person name="Albertini A.M."/>
            <person name="Alloni G."/>
            <person name="Azevedo V."/>
            <person name="Bertero M.G."/>
            <person name="Bessieres P."/>
            <person name="Bolotin A."/>
            <person name="Borchert S."/>
            <person name="Borriss R."/>
            <person name="Boursier L."/>
            <person name="Brans A."/>
            <person name="Braun M."/>
            <person name="Brignell S.C."/>
            <person name="Bron S."/>
            <person name="Brouillet S."/>
            <person name="Bruschi C.V."/>
            <person name="Caldwell B."/>
            <person name="Capuano V."/>
            <person name="Carter N.M."/>
            <person name="Choi S.-K."/>
            <person name="Codani J.-J."/>
            <person name="Connerton I.F."/>
            <person name="Cummings N.J."/>
            <person name="Daniel R.A."/>
            <person name="Denizot F."/>
            <person name="Devine K.M."/>
            <person name="Duesterhoeft A."/>
            <person name="Ehrlich S.D."/>
            <person name="Emmerson P.T."/>
            <person name="Entian K.-D."/>
            <person name="Errington J."/>
            <person name="Fabret C."/>
            <person name="Ferrari E."/>
            <person name="Foulger D."/>
            <person name="Fritz C."/>
            <person name="Fujita M."/>
            <person name="Fujita Y."/>
            <person name="Fuma S."/>
            <person name="Galizzi A."/>
            <person name="Galleron N."/>
            <person name="Ghim S.-Y."/>
            <person name="Glaser P."/>
            <person name="Goffeau A."/>
            <person name="Golightly E.J."/>
            <person name="Grandi G."/>
            <person name="Guiseppi G."/>
            <person name="Guy B.J."/>
            <person name="Haga K."/>
            <person name="Haiech J."/>
            <person name="Harwood C.R."/>
            <person name="Henaut A."/>
            <person name="Hilbert H."/>
            <person name="Holsappel S."/>
            <person name="Hosono S."/>
            <person name="Hullo M.-F."/>
            <person name="Itaya M."/>
            <person name="Jones L.-M."/>
            <person name="Joris B."/>
            <person name="Karamata D."/>
            <person name="Kasahara Y."/>
            <person name="Klaerr-Blanchard M."/>
            <person name="Klein C."/>
            <person name="Kobayashi Y."/>
            <person name="Koetter P."/>
            <person name="Koningstein G."/>
            <person name="Krogh S."/>
            <person name="Kumano M."/>
            <person name="Kurita K."/>
            <person name="Lapidus A."/>
            <person name="Lardinois S."/>
            <person name="Lauber J."/>
            <person name="Lazarevic V."/>
            <person name="Lee S.-M."/>
            <person name="Levine A."/>
            <person name="Liu H."/>
            <person name="Masuda S."/>
            <person name="Mauel C."/>
            <person name="Medigue C."/>
            <person name="Medina N."/>
            <person name="Mellado R.P."/>
            <person name="Mizuno M."/>
            <person name="Moestl D."/>
            <person name="Nakai S."/>
            <person name="Noback M."/>
            <person name="Noone D."/>
            <person name="O'Reilly M."/>
            <person name="Ogawa K."/>
            <person name="Ogiwara A."/>
            <person name="Oudega B."/>
            <person name="Park S.-H."/>
            <person name="Parro V."/>
            <person name="Pohl T.M."/>
            <person name="Portetelle D."/>
            <person name="Porwollik S."/>
            <person name="Prescott A.M."/>
            <person name="Presecan E."/>
            <person name="Pujic P."/>
            <person name="Purnelle B."/>
            <person name="Rapoport G."/>
            <person name="Rey M."/>
            <person name="Reynolds S."/>
            <person name="Rieger M."/>
            <person name="Rivolta C."/>
            <person name="Rocha E."/>
            <person name="Roche B."/>
            <person name="Rose M."/>
            <person name="Sadaie Y."/>
            <person name="Sato T."/>
            <person name="Scanlan E."/>
            <person name="Schleich S."/>
            <person name="Schroeter R."/>
            <person name="Scoffone F."/>
            <person name="Sekiguchi J."/>
            <person name="Sekowska A."/>
            <person name="Seror S.J."/>
            <person name="Serror P."/>
            <person name="Shin B.-S."/>
            <person name="Soldo B."/>
            <person name="Sorokin A."/>
            <person name="Tacconi E."/>
            <person name="Takagi T."/>
            <person name="Takahashi H."/>
            <person name="Takemaru K."/>
            <person name="Takeuchi M."/>
            <person name="Tamakoshi A."/>
            <person name="Tanaka T."/>
            <person name="Terpstra P."/>
            <person name="Tognoni A."/>
            <person name="Tosato V."/>
            <person name="Uchiyama S."/>
            <person name="Vandenbol M."/>
            <person name="Vannier F."/>
            <person name="Vassarotti A."/>
            <person name="Viari A."/>
            <person name="Wambutt R."/>
            <person name="Wedler E."/>
            <person name="Wedler H."/>
            <person name="Weitzenegger T."/>
            <person name="Winters P."/>
            <person name="Wipat A."/>
            <person name="Yamamoto H."/>
            <person name="Yamane K."/>
            <person name="Yasumoto K."/>
            <person name="Yata K."/>
            <person name="Yoshida K."/>
            <person name="Yoshikawa H.-F."/>
            <person name="Zumstein E."/>
            <person name="Yoshikawa H."/>
            <person name="Danchin A."/>
        </authorList>
    </citation>
    <scope>NUCLEOTIDE SEQUENCE [LARGE SCALE GENOMIC DNA]</scope>
    <source>
        <strain>168</strain>
    </source>
</reference>
<accession>P39129</accession>
<gene>
    <name type="primary">lplC</name>
    <name type="ordered locus">BSU07120</name>
</gene>
<comment type="subcellular location">
    <subcellularLocation>
        <location>Cell membrane</location>
        <topology>Multi-pass membrane protein</topology>
    </subcellularLocation>
</comment>
<comment type="similarity">
    <text evidence="2">Belongs to the binding-protein-dependent transport system permease family. CysTW subfamily.</text>
</comment>
<sequence length="295" mass="32834">MAEIHTMHNTKAGRVFDVCNILFLGGVGAITILPFLYIIAGSFATEAELAQRSFFIFPKTFTLDAYKYVFSTPTFLRSMGVSIFITVVGTAVQLFFTFTMAYPLAKRHVKGRNLLLNLVIFSMLFSGGMIPTYLVVKSLGLLDTYWALILPMAINPFNLIIIKNFFQQLPRELEESAKIDGCSEIGVFWRIALPLSKPVIATFALFYAVGIWNDFFHALLYINDSAKWPLQMVLRQVTILSDLTATNGDTMQNAVPPEQGIKLAVIVIATLPILAVYPFLQKHFAKGMLIGSVKG</sequence>
<name>LPLC_BACSU</name>